<name>LONM1_DICDI</name>
<dbReference type="EC" id="3.4.21.53" evidence="1"/>
<dbReference type="EMBL" id="AAFI02000023">
    <property type="protein sequence ID" value="EAL68204.2"/>
    <property type="status" value="ALT_SEQ"/>
    <property type="molecule type" value="Genomic_DNA"/>
</dbReference>
<dbReference type="RefSeq" id="XP_642098.2">
    <property type="nucleotide sequence ID" value="XM_637006.2"/>
</dbReference>
<dbReference type="SMR" id="Q54YV4"/>
<dbReference type="FunCoup" id="Q54YV4">
    <property type="interactions" value="392"/>
</dbReference>
<dbReference type="STRING" id="44689.Q54YV4"/>
<dbReference type="PaxDb" id="44689-DDB0235386"/>
<dbReference type="EnsemblProtists" id="EAL68204">
    <property type="protein sequence ID" value="EAL68204"/>
    <property type="gene ID" value="DDB_G0278063"/>
</dbReference>
<dbReference type="GeneID" id="8621309"/>
<dbReference type="KEGG" id="ddi:DDB_G0278063"/>
<dbReference type="dictyBase" id="DDB_G0278063"/>
<dbReference type="VEuPathDB" id="AmoebaDB:DDB_G0278063"/>
<dbReference type="eggNOG" id="KOG2004">
    <property type="taxonomic scope" value="Eukaryota"/>
</dbReference>
<dbReference type="InParanoid" id="Q54YV4"/>
<dbReference type="PhylomeDB" id="Q54YV4"/>
<dbReference type="Reactome" id="R-DDI-9837999">
    <property type="pathway name" value="Mitochondrial protein degradation"/>
</dbReference>
<dbReference type="PRO" id="PR:Q54YV4"/>
<dbReference type="Proteomes" id="UP000002195">
    <property type="component" value="Chromosome 3"/>
</dbReference>
<dbReference type="GO" id="GO:0005759">
    <property type="term" value="C:mitochondrial matrix"/>
    <property type="evidence" value="ECO:0000318"/>
    <property type="project" value="GO_Central"/>
</dbReference>
<dbReference type="GO" id="GO:0005524">
    <property type="term" value="F:ATP binding"/>
    <property type="evidence" value="ECO:0007669"/>
    <property type="project" value="UniProtKB-UniRule"/>
</dbReference>
<dbReference type="GO" id="GO:0016887">
    <property type="term" value="F:ATP hydrolysis activity"/>
    <property type="evidence" value="ECO:0007669"/>
    <property type="project" value="UniProtKB-UniRule"/>
</dbReference>
<dbReference type="GO" id="GO:0004176">
    <property type="term" value="F:ATP-dependent peptidase activity"/>
    <property type="evidence" value="ECO:0000318"/>
    <property type="project" value="GO_Central"/>
</dbReference>
<dbReference type="GO" id="GO:0043565">
    <property type="term" value="F:sequence-specific DNA binding"/>
    <property type="evidence" value="ECO:0007669"/>
    <property type="project" value="UniProtKB-UniRule"/>
</dbReference>
<dbReference type="GO" id="GO:0004252">
    <property type="term" value="F:serine-type endopeptidase activity"/>
    <property type="evidence" value="ECO:0007669"/>
    <property type="project" value="UniProtKB-UniRule"/>
</dbReference>
<dbReference type="GO" id="GO:0003697">
    <property type="term" value="F:single-stranded DNA binding"/>
    <property type="evidence" value="ECO:0000318"/>
    <property type="project" value="GO_Central"/>
</dbReference>
<dbReference type="GO" id="GO:0034599">
    <property type="term" value="P:cellular response to oxidative stress"/>
    <property type="evidence" value="ECO:0007669"/>
    <property type="project" value="UniProtKB-UniRule"/>
</dbReference>
<dbReference type="GO" id="GO:0051131">
    <property type="term" value="P:chaperone-mediated protein complex assembly"/>
    <property type="evidence" value="ECO:0000318"/>
    <property type="project" value="GO_Central"/>
</dbReference>
<dbReference type="GO" id="GO:0007005">
    <property type="term" value="P:mitochondrion organization"/>
    <property type="evidence" value="ECO:0000318"/>
    <property type="project" value="GO_Central"/>
</dbReference>
<dbReference type="GO" id="GO:0070407">
    <property type="term" value="P:oxidation-dependent protein catabolic process"/>
    <property type="evidence" value="ECO:0007669"/>
    <property type="project" value="UniProtKB-UniRule"/>
</dbReference>
<dbReference type="GO" id="GO:0006515">
    <property type="term" value="P:protein quality control for misfolded or incompletely synthesized proteins"/>
    <property type="evidence" value="ECO:0000318"/>
    <property type="project" value="GO_Central"/>
</dbReference>
<dbReference type="CDD" id="cd19500">
    <property type="entry name" value="RecA-like_Lon"/>
    <property type="match status" value="1"/>
</dbReference>
<dbReference type="FunFam" id="3.40.50.300:FF:000021">
    <property type="entry name" value="Lon protease homolog"/>
    <property type="match status" value="1"/>
</dbReference>
<dbReference type="FunFam" id="1.20.5.5270:FF:000001">
    <property type="entry name" value="Lon protease homolog, mitochondrial"/>
    <property type="match status" value="1"/>
</dbReference>
<dbReference type="FunFam" id="3.30.230.10:FF:000015">
    <property type="entry name" value="Lon protease homolog, mitochondrial"/>
    <property type="match status" value="1"/>
</dbReference>
<dbReference type="FunFam" id="1.20.58.1480:FF:000017">
    <property type="entry name" value="Lon protease homolog, mitochondrial 1"/>
    <property type="match status" value="1"/>
</dbReference>
<dbReference type="Gene3D" id="1.10.8.60">
    <property type="match status" value="1"/>
</dbReference>
<dbReference type="Gene3D" id="1.20.5.5270">
    <property type="match status" value="1"/>
</dbReference>
<dbReference type="Gene3D" id="1.20.58.1480">
    <property type="match status" value="1"/>
</dbReference>
<dbReference type="Gene3D" id="3.30.230.10">
    <property type="match status" value="1"/>
</dbReference>
<dbReference type="Gene3D" id="3.40.50.300">
    <property type="entry name" value="P-loop containing nucleotide triphosphate hydrolases"/>
    <property type="match status" value="1"/>
</dbReference>
<dbReference type="HAMAP" id="MF_03120">
    <property type="entry name" value="lonm_euk"/>
    <property type="match status" value="1"/>
</dbReference>
<dbReference type="InterPro" id="IPR003593">
    <property type="entry name" value="AAA+_ATPase"/>
</dbReference>
<dbReference type="InterPro" id="IPR003959">
    <property type="entry name" value="ATPase_AAA_core"/>
</dbReference>
<dbReference type="InterPro" id="IPR004815">
    <property type="entry name" value="Lon_bac/euk-typ"/>
</dbReference>
<dbReference type="InterPro" id="IPR054594">
    <property type="entry name" value="Lon_lid"/>
</dbReference>
<dbReference type="InterPro" id="IPR008269">
    <property type="entry name" value="Lon_proteolytic"/>
</dbReference>
<dbReference type="InterPro" id="IPR027065">
    <property type="entry name" value="Lon_Prtase"/>
</dbReference>
<dbReference type="InterPro" id="IPR003111">
    <property type="entry name" value="Lon_prtase_N"/>
</dbReference>
<dbReference type="InterPro" id="IPR027503">
    <property type="entry name" value="Lonm_euk"/>
</dbReference>
<dbReference type="InterPro" id="IPR027417">
    <property type="entry name" value="P-loop_NTPase"/>
</dbReference>
<dbReference type="InterPro" id="IPR008268">
    <property type="entry name" value="Peptidase_S16_AS"/>
</dbReference>
<dbReference type="InterPro" id="IPR020568">
    <property type="entry name" value="Ribosomal_Su5_D2-typ_SF"/>
</dbReference>
<dbReference type="InterPro" id="IPR014721">
    <property type="entry name" value="Ribsml_uS5_D2-typ_fold_subgr"/>
</dbReference>
<dbReference type="NCBIfam" id="TIGR00763">
    <property type="entry name" value="lon"/>
    <property type="match status" value="1"/>
</dbReference>
<dbReference type="PANTHER" id="PTHR43718">
    <property type="entry name" value="LON PROTEASE"/>
    <property type="match status" value="1"/>
</dbReference>
<dbReference type="PANTHER" id="PTHR43718:SF16">
    <property type="entry name" value="LON PROTEASE HOMOLOG, MITOCHONDRIAL 1"/>
    <property type="match status" value="1"/>
</dbReference>
<dbReference type="Pfam" id="PF00004">
    <property type="entry name" value="AAA"/>
    <property type="match status" value="1"/>
</dbReference>
<dbReference type="Pfam" id="PF05362">
    <property type="entry name" value="Lon_C"/>
    <property type="match status" value="1"/>
</dbReference>
<dbReference type="Pfam" id="PF22667">
    <property type="entry name" value="Lon_lid"/>
    <property type="match status" value="1"/>
</dbReference>
<dbReference type="Pfam" id="PF02190">
    <property type="entry name" value="LON_substr_bdg"/>
    <property type="match status" value="1"/>
</dbReference>
<dbReference type="PRINTS" id="PR00830">
    <property type="entry name" value="ENDOLAPTASE"/>
</dbReference>
<dbReference type="SMART" id="SM00382">
    <property type="entry name" value="AAA"/>
    <property type="match status" value="1"/>
</dbReference>
<dbReference type="SMART" id="SM00464">
    <property type="entry name" value="LON"/>
    <property type="match status" value="1"/>
</dbReference>
<dbReference type="SUPFAM" id="SSF52540">
    <property type="entry name" value="P-loop containing nucleoside triphosphate hydrolases"/>
    <property type="match status" value="1"/>
</dbReference>
<dbReference type="SUPFAM" id="SSF54211">
    <property type="entry name" value="Ribosomal protein S5 domain 2-like"/>
    <property type="match status" value="1"/>
</dbReference>
<dbReference type="PROSITE" id="PS51787">
    <property type="entry name" value="LON_N"/>
    <property type="match status" value="1"/>
</dbReference>
<dbReference type="PROSITE" id="PS51786">
    <property type="entry name" value="LON_PROTEOLYTIC"/>
    <property type="match status" value="1"/>
</dbReference>
<dbReference type="PROSITE" id="PS01046">
    <property type="entry name" value="LON_SER"/>
    <property type="match status" value="1"/>
</dbReference>
<evidence type="ECO:0000255" key="1">
    <source>
        <dbReference type="HAMAP-Rule" id="MF_03120"/>
    </source>
</evidence>
<evidence type="ECO:0000255" key="2">
    <source>
        <dbReference type="PROSITE-ProRule" id="PRU01122"/>
    </source>
</evidence>
<evidence type="ECO:0000255" key="3">
    <source>
        <dbReference type="PROSITE-ProRule" id="PRU01123"/>
    </source>
</evidence>
<evidence type="ECO:0000256" key="4">
    <source>
        <dbReference type="SAM" id="MobiDB-lite"/>
    </source>
</evidence>
<evidence type="ECO:0000305" key="5"/>
<feature type="chain" id="PRO_0000395764" description="Lon protease homolog, mitochondrial 1">
    <location>
        <begin position="1"/>
        <end position="956"/>
    </location>
</feature>
<feature type="domain" description="Lon N-terminal" evidence="3">
    <location>
        <begin position="159"/>
        <end position="357"/>
    </location>
</feature>
<feature type="domain" description="Lon proteolytic" evidence="2">
    <location>
        <begin position="747"/>
        <end position="945"/>
    </location>
</feature>
<feature type="region of interest" description="Disordered" evidence="4">
    <location>
        <begin position="37"/>
        <end position="57"/>
    </location>
</feature>
<feature type="region of interest" description="Disordered" evidence="4">
    <location>
        <begin position="83"/>
        <end position="123"/>
    </location>
</feature>
<feature type="region of interest" description="Disordered" evidence="4">
    <location>
        <begin position="777"/>
        <end position="800"/>
    </location>
</feature>
<feature type="compositionally biased region" description="Basic and acidic residues" evidence="4">
    <location>
        <begin position="91"/>
        <end position="123"/>
    </location>
</feature>
<feature type="compositionally biased region" description="Low complexity" evidence="4">
    <location>
        <begin position="777"/>
        <end position="795"/>
    </location>
</feature>
<feature type="active site" evidence="1">
    <location>
        <position position="851"/>
    </location>
</feature>
<feature type="active site" evidence="1">
    <location>
        <position position="894"/>
    </location>
</feature>
<feature type="binding site" evidence="1">
    <location>
        <begin position="511"/>
        <end position="518"/>
    </location>
    <ligand>
        <name>ATP</name>
        <dbReference type="ChEBI" id="CHEBI:30616"/>
    </ligand>
</feature>
<proteinExistence type="inferred from homology"/>
<keyword id="KW-0067">ATP-binding</keyword>
<keyword id="KW-0238">DNA-binding</keyword>
<keyword id="KW-0378">Hydrolase</keyword>
<keyword id="KW-0496">Mitochondrion</keyword>
<keyword id="KW-0547">Nucleotide-binding</keyword>
<keyword id="KW-0645">Protease</keyword>
<keyword id="KW-1185">Reference proteome</keyword>
<keyword id="KW-0720">Serine protease</keyword>
<gene>
    <name type="ORF">DDB_G0278063</name>
</gene>
<reference key="1">
    <citation type="journal article" date="2005" name="Nature">
        <title>The genome of the social amoeba Dictyostelium discoideum.</title>
        <authorList>
            <person name="Eichinger L."/>
            <person name="Pachebat J.A."/>
            <person name="Gloeckner G."/>
            <person name="Rajandream M.A."/>
            <person name="Sucgang R."/>
            <person name="Berriman M."/>
            <person name="Song J."/>
            <person name="Olsen R."/>
            <person name="Szafranski K."/>
            <person name="Xu Q."/>
            <person name="Tunggal B."/>
            <person name="Kummerfeld S."/>
            <person name="Madera M."/>
            <person name="Konfortov B.A."/>
            <person name="Rivero F."/>
            <person name="Bankier A.T."/>
            <person name="Lehmann R."/>
            <person name="Hamlin N."/>
            <person name="Davies R."/>
            <person name="Gaudet P."/>
            <person name="Fey P."/>
            <person name="Pilcher K."/>
            <person name="Chen G."/>
            <person name="Saunders D."/>
            <person name="Sodergren E.J."/>
            <person name="Davis P."/>
            <person name="Kerhornou A."/>
            <person name="Nie X."/>
            <person name="Hall N."/>
            <person name="Anjard C."/>
            <person name="Hemphill L."/>
            <person name="Bason N."/>
            <person name="Farbrother P."/>
            <person name="Desany B."/>
            <person name="Just E."/>
            <person name="Morio T."/>
            <person name="Rost R."/>
            <person name="Churcher C.M."/>
            <person name="Cooper J."/>
            <person name="Haydock S."/>
            <person name="van Driessche N."/>
            <person name="Cronin A."/>
            <person name="Goodhead I."/>
            <person name="Muzny D.M."/>
            <person name="Mourier T."/>
            <person name="Pain A."/>
            <person name="Lu M."/>
            <person name="Harper D."/>
            <person name="Lindsay R."/>
            <person name="Hauser H."/>
            <person name="James K.D."/>
            <person name="Quiles M."/>
            <person name="Madan Babu M."/>
            <person name="Saito T."/>
            <person name="Buchrieser C."/>
            <person name="Wardroper A."/>
            <person name="Felder M."/>
            <person name="Thangavelu M."/>
            <person name="Johnson D."/>
            <person name="Knights A."/>
            <person name="Loulseged H."/>
            <person name="Mungall K.L."/>
            <person name="Oliver K."/>
            <person name="Price C."/>
            <person name="Quail M.A."/>
            <person name="Urushihara H."/>
            <person name="Hernandez J."/>
            <person name="Rabbinowitsch E."/>
            <person name="Steffen D."/>
            <person name="Sanders M."/>
            <person name="Ma J."/>
            <person name="Kohara Y."/>
            <person name="Sharp S."/>
            <person name="Simmonds M.N."/>
            <person name="Spiegler S."/>
            <person name="Tivey A."/>
            <person name="Sugano S."/>
            <person name="White B."/>
            <person name="Walker D."/>
            <person name="Woodward J.R."/>
            <person name="Winckler T."/>
            <person name="Tanaka Y."/>
            <person name="Shaulsky G."/>
            <person name="Schleicher M."/>
            <person name="Weinstock G.M."/>
            <person name="Rosenthal A."/>
            <person name="Cox E.C."/>
            <person name="Chisholm R.L."/>
            <person name="Gibbs R.A."/>
            <person name="Loomis W.F."/>
            <person name="Platzer M."/>
            <person name="Kay R.R."/>
            <person name="Williams J.G."/>
            <person name="Dear P.H."/>
            <person name="Noegel A.A."/>
            <person name="Barrell B.G."/>
            <person name="Kuspa A."/>
        </authorList>
    </citation>
    <scope>NUCLEOTIDE SEQUENCE [LARGE SCALE GENOMIC DNA]</scope>
    <source>
        <strain>AX4</strain>
    </source>
</reference>
<accession>Q54YV4</accession>
<sequence>MLSINNKLKNLKLSTVKNLYNKSSSISIILVNNNNNNNNNNNNNNNNNNNNNNNNNNFISLSTTNLFNQKLCIESYKKVNYCKKKGGGNKNNDDNDNEKNEKNEKKVKNEKKEKNEKNDGNEKVEIVEDNDLIVPLSKELLQFDKPSNKRKDWPLNSEVVIYPSNSVNFIGTTGPINLGFQFITRLVPNASGKTFLGFFLCKDAYRNNNNQIGRTIDSIHNVGVLAQVTLSPSGIYHFETIKRIRIKEVQNGQFPFIASIEPLSNDERELKDPRIAELMTKINVLSLEYRKLYPDVYTINSVDFENQIEVIDNPDYYLAAVINYYGLNYPDECQKILETQSVVKRLEMLYHMILNEQPLLALQQKIAKDLDDKTTAYKNKLLLTEQLKKLKALLGNETDEKEKTIEKYQNKLSELTLISESSKKVIQDEIYKISTIDPSSSEYSALKNYLEWLTNLPWGIYSADYFDLKHSKMVLDSDHYGLEDIKQRILEFISVGHIKGTVQGKILCFIGPPGTGKTSIAKSIAKALKKEFFRFSVGGLFDESEIKGHRRTYVGSMPGKIIQALKITQTSNPVILIDEIDKIGKRNHGDPSSALLEVLDPEQNVSFVDHYLDTPYDLSKVLFICTANSGQDIPAALSDRMEIIRLPGYVEEEQIEIVKNFIIPKTFIDCGIKLDQLSISDDVIKQIVKFYSREVGIRELEKLIEKIMRKTALKLVNGTAERVDLTLDNLEQYLGIPSYTSDRYYDVTPIGVVNGLAYTKKGGATLYIESTSEEIQKPLSSLPPSQQQQNQLEPSIKTTGNLGDVMSESSTIAYTFAKNFLYELDPNNTFFSNHNIHLHSPQGNIPKDGPSAGVTMVTSLLSLALNEPVQNNLGMTGEVTITGKVITIGGVKEKTIAAKRSGLTSVIFPINNRINFEELPTYIKNDIDVTYANDYKDVFEVAFPNKKYLLNNLKTF</sequence>
<organism>
    <name type="scientific">Dictyostelium discoideum</name>
    <name type="common">Social amoeba</name>
    <dbReference type="NCBI Taxonomy" id="44689"/>
    <lineage>
        <taxon>Eukaryota</taxon>
        <taxon>Amoebozoa</taxon>
        <taxon>Evosea</taxon>
        <taxon>Eumycetozoa</taxon>
        <taxon>Dictyostelia</taxon>
        <taxon>Dictyosteliales</taxon>
        <taxon>Dictyosteliaceae</taxon>
        <taxon>Dictyostelium</taxon>
    </lineage>
</organism>
<comment type="function">
    <text evidence="1">ATP-dependent serine protease that mediates the selective degradation of misfolded, unassembled or oxidatively damaged polypeptides as well as certain short-lived regulatory proteins in the mitochondrial matrix. May also have a chaperone function in the assembly of inner membrane protein complexes. Participates in the regulation of mitochondrial gene expression and in the maintenance of the integrity of the mitochondrial genome. Binds to mitochondrial DNA in a site-specific manner.</text>
</comment>
<comment type="catalytic activity">
    <reaction evidence="1">
        <text>Hydrolysis of proteins in presence of ATP.</text>
        <dbReference type="EC" id="3.4.21.53"/>
    </reaction>
</comment>
<comment type="subunit">
    <text evidence="1">Homohexamer or homoheptamer. Organized in a ring with a central cavity.</text>
</comment>
<comment type="subcellular location">
    <subcellularLocation>
        <location evidence="1">Mitochondrion matrix</location>
    </subcellularLocation>
</comment>
<comment type="miscellaneous">
    <text evidence="1">This protein may be expected to contain an N-terminal transit peptide but none has been predicted.</text>
</comment>
<comment type="similarity">
    <text evidence="1">Belongs to the peptidase S16 family.</text>
</comment>
<comment type="sequence caution" evidence="5">
    <conflict type="miscellaneous discrepancy">
        <sequence resource="EMBL-CDS" id="EAL68204"/>
    </conflict>
    <text>The initiator methionine is coded by a AGG arginine codon. EST data suggests that the genomic sequence of the start codon is incorrect.</text>
</comment>
<protein>
    <recommendedName>
        <fullName evidence="1">Lon protease homolog, mitochondrial 1</fullName>
        <ecNumber evidence="1">3.4.21.53</ecNumber>
    </recommendedName>
</protein>